<reference key="1">
    <citation type="journal article" date="2002" name="Nature">
        <title>The genome sequence of Schizosaccharomyces pombe.</title>
        <authorList>
            <person name="Wood V."/>
            <person name="Gwilliam R."/>
            <person name="Rajandream M.A."/>
            <person name="Lyne M.H."/>
            <person name="Lyne R."/>
            <person name="Stewart A."/>
            <person name="Sgouros J.G."/>
            <person name="Peat N."/>
            <person name="Hayles J."/>
            <person name="Baker S.G."/>
            <person name="Basham D."/>
            <person name="Bowman S."/>
            <person name="Brooks K."/>
            <person name="Brown D."/>
            <person name="Brown S."/>
            <person name="Chillingworth T."/>
            <person name="Churcher C.M."/>
            <person name="Collins M."/>
            <person name="Connor R."/>
            <person name="Cronin A."/>
            <person name="Davis P."/>
            <person name="Feltwell T."/>
            <person name="Fraser A."/>
            <person name="Gentles S."/>
            <person name="Goble A."/>
            <person name="Hamlin N."/>
            <person name="Harris D.E."/>
            <person name="Hidalgo J."/>
            <person name="Hodgson G."/>
            <person name="Holroyd S."/>
            <person name="Hornsby T."/>
            <person name="Howarth S."/>
            <person name="Huckle E.J."/>
            <person name="Hunt S."/>
            <person name="Jagels K."/>
            <person name="James K.D."/>
            <person name="Jones L."/>
            <person name="Jones M."/>
            <person name="Leather S."/>
            <person name="McDonald S."/>
            <person name="McLean J."/>
            <person name="Mooney P."/>
            <person name="Moule S."/>
            <person name="Mungall K.L."/>
            <person name="Murphy L.D."/>
            <person name="Niblett D."/>
            <person name="Odell C."/>
            <person name="Oliver K."/>
            <person name="O'Neil S."/>
            <person name="Pearson D."/>
            <person name="Quail M.A."/>
            <person name="Rabbinowitsch E."/>
            <person name="Rutherford K.M."/>
            <person name="Rutter S."/>
            <person name="Saunders D."/>
            <person name="Seeger K."/>
            <person name="Sharp S."/>
            <person name="Skelton J."/>
            <person name="Simmonds M.N."/>
            <person name="Squares R."/>
            <person name="Squares S."/>
            <person name="Stevens K."/>
            <person name="Taylor K."/>
            <person name="Taylor R.G."/>
            <person name="Tivey A."/>
            <person name="Walsh S.V."/>
            <person name="Warren T."/>
            <person name="Whitehead S."/>
            <person name="Woodward J.R."/>
            <person name="Volckaert G."/>
            <person name="Aert R."/>
            <person name="Robben J."/>
            <person name="Grymonprez B."/>
            <person name="Weltjens I."/>
            <person name="Vanstreels E."/>
            <person name="Rieger M."/>
            <person name="Schaefer M."/>
            <person name="Mueller-Auer S."/>
            <person name="Gabel C."/>
            <person name="Fuchs M."/>
            <person name="Duesterhoeft A."/>
            <person name="Fritzc C."/>
            <person name="Holzer E."/>
            <person name="Moestl D."/>
            <person name="Hilbert H."/>
            <person name="Borzym K."/>
            <person name="Langer I."/>
            <person name="Beck A."/>
            <person name="Lehrach H."/>
            <person name="Reinhardt R."/>
            <person name="Pohl T.M."/>
            <person name="Eger P."/>
            <person name="Zimmermann W."/>
            <person name="Wedler H."/>
            <person name="Wambutt R."/>
            <person name="Purnelle B."/>
            <person name="Goffeau A."/>
            <person name="Cadieu E."/>
            <person name="Dreano S."/>
            <person name="Gloux S."/>
            <person name="Lelaure V."/>
            <person name="Mottier S."/>
            <person name="Galibert F."/>
            <person name="Aves S.J."/>
            <person name="Xiang Z."/>
            <person name="Hunt C."/>
            <person name="Moore K."/>
            <person name="Hurst S.M."/>
            <person name="Lucas M."/>
            <person name="Rochet M."/>
            <person name="Gaillardin C."/>
            <person name="Tallada V.A."/>
            <person name="Garzon A."/>
            <person name="Thode G."/>
            <person name="Daga R.R."/>
            <person name="Cruzado L."/>
            <person name="Jimenez J."/>
            <person name="Sanchez M."/>
            <person name="del Rey F."/>
            <person name="Benito J."/>
            <person name="Dominguez A."/>
            <person name="Revuelta J.L."/>
            <person name="Moreno S."/>
            <person name="Armstrong J."/>
            <person name="Forsburg S.L."/>
            <person name="Cerutti L."/>
            <person name="Lowe T."/>
            <person name="McCombie W.R."/>
            <person name="Paulsen I."/>
            <person name="Potashkin J."/>
            <person name="Shpakovski G.V."/>
            <person name="Ussery D."/>
            <person name="Barrell B.G."/>
            <person name="Nurse P."/>
        </authorList>
    </citation>
    <scope>NUCLEOTIDE SEQUENCE [LARGE SCALE GENOMIC DNA]</scope>
    <source>
        <strain>972 / ATCC 24843</strain>
    </source>
</reference>
<reference key="2">
    <citation type="journal article" date="2006" name="Nat. Biotechnol.">
        <title>ORFeome cloning and global analysis of protein localization in the fission yeast Schizosaccharomyces pombe.</title>
        <authorList>
            <person name="Matsuyama A."/>
            <person name="Arai R."/>
            <person name="Yashiroda Y."/>
            <person name="Shirai A."/>
            <person name="Kamata A."/>
            <person name="Sekido S."/>
            <person name="Kobayashi Y."/>
            <person name="Hashimoto A."/>
            <person name="Hamamoto M."/>
            <person name="Hiraoka Y."/>
            <person name="Horinouchi S."/>
            <person name="Yoshida M."/>
        </authorList>
    </citation>
    <scope>SUBCELLULAR LOCATION [LARGE SCALE ANALYSIS]</scope>
</reference>
<evidence type="ECO:0000255" key="1"/>
<evidence type="ECO:0000269" key="2">
    <source>
    </source>
</evidence>
<gene>
    <name type="ORF">SPCC569.06</name>
</gene>
<name>YQO6_SCHPO</name>
<dbReference type="EMBL" id="CU329672">
    <property type="protein sequence ID" value="CAB42067.1"/>
    <property type="molecule type" value="Genomic_DNA"/>
</dbReference>
<dbReference type="PIR" id="T41408">
    <property type="entry name" value="T41408"/>
</dbReference>
<dbReference type="RefSeq" id="NP_588567.1">
    <property type="nucleotide sequence ID" value="NM_001023554.2"/>
</dbReference>
<dbReference type="BioGRID" id="275281">
    <property type="interactions" value="10"/>
</dbReference>
<dbReference type="iPTMnet" id="Q9Y7S5"/>
<dbReference type="PaxDb" id="4896-SPCC569.06.1"/>
<dbReference type="EnsemblFungi" id="SPCC569.06.1">
    <property type="protein sequence ID" value="SPCC569.06.1:pep"/>
    <property type="gene ID" value="SPCC569.06"/>
</dbReference>
<dbReference type="KEGG" id="spo:2538696"/>
<dbReference type="PomBase" id="SPCC569.06"/>
<dbReference type="VEuPathDB" id="FungiDB:SPCC569.06"/>
<dbReference type="HOGENOM" id="CLU_600139_0_0_1"/>
<dbReference type="InParanoid" id="Q9Y7S5"/>
<dbReference type="OMA" id="MAMTANE"/>
<dbReference type="PRO" id="PR:Q9Y7S5"/>
<dbReference type="Proteomes" id="UP000002485">
    <property type="component" value="Chromosome III"/>
</dbReference>
<dbReference type="GO" id="GO:0005783">
    <property type="term" value="C:endoplasmic reticulum"/>
    <property type="evidence" value="ECO:0007005"/>
    <property type="project" value="PomBase"/>
</dbReference>
<dbReference type="GO" id="GO:0005789">
    <property type="term" value="C:endoplasmic reticulum membrane"/>
    <property type="evidence" value="ECO:0007669"/>
    <property type="project" value="UniProtKB-SubCell"/>
</dbReference>
<dbReference type="GO" id="GO:0005794">
    <property type="term" value="C:Golgi apparatus"/>
    <property type="evidence" value="ECO:0007005"/>
    <property type="project" value="PomBase"/>
</dbReference>
<dbReference type="GO" id="GO:0000139">
    <property type="term" value="C:Golgi membrane"/>
    <property type="evidence" value="ECO:0007669"/>
    <property type="project" value="UniProtKB-SubCell"/>
</dbReference>
<feature type="signal peptide" evidence="1">
    <location>
        <begin position="1"/>
        <end position="19"/>
    </location>
</feature>
<feature type="chain" id="PRO_0000352822" description="Uncharacterized membrane protein C569.06">
    <location>
        <begin position="20"/>
        <end position="478"/>
    </location>
</feature>
<feature type="topological domain" description="Lumenal" evidence="1">
    <location>
        <begin position="20"/>
        <end position="214"/>
    </location>
</feature>
<feature type="transmembrane region" description="Helical" evidence="1">
    <location>
        <begin position="215"/>
        <end position="235"/>
    </location>
</feature>
<feature type="topological domain" description="Cytoplasmic" evidence="1">
    <location>
        <begin position="236"/>
        <end position="240"/>
    </location>
</feature>
<feature type="transmembrane region" description="Helical" evidence="1">
    <location>
        <begin position="241"/>
        <end position="261"/>
    </location>
</feature>
<feature type="topological domain" description="Lumenal" evidence="1">
    <location>
        <begin position="262"/>
        <end position="289"/>
    </location>
</feature>
<feature type="transmembrane region" description="Helical" evidence="1">
    <location>
        <begin position="290"/>
        <end position="310"/>
    </location>
</feature>
<feature type="topological domain" description="Cytoplasmic" evidence="1">
    <location>
        <begin position="311"/>
        <end position="317"/>
    </location>
</feature>
<feature type="transmembrane region" description="Helical" evidence="1">
    <location>
        <begin position="318"/>
        <end position="338"/>
    </location>
</feature>
<feature type="topological domain" description="Lumenal" evidence="1">
    <location>
        <begin position="339"/>
        <end position="356"/>
    </location>
</feature>
<feature type="transmembrane region" description="Helical" evidence="1">
    <location>
        <begin position="357"/>
        <end position="377"/>
    </location>
</feature>
<feature type="topological domain" description="Cytoplasmic" evidence="1">
    <location>
        <begin position="378"/>
        <end position="391"/>
    </location>
</feature>
<feature type="transmembrane region" description="Helical" evidence="1">
    <location>
        <begin position="392"/>
        <end position="412"/>
    </location>
</feature>
<feature type="topological domain" description="Lumenal" evidence="1">
    <location>
        <begin position="413"/>
        <end position="427"/>
    </location>
</feature>
<feature type="transmembrane region" description="Helical" evidence="1">
    <location>
        <begin position="428"/>
        <end position="448"/>
    </location>
</feature>
<feature type="topological domain" description="Cytoplasmic" evidence="1">
    <location>
        <begin position="449"/>
        <end position="478"/>
    </location>
</feature>
<accession>Q9Y7S5</accession>
<sequence>MKLFPLCLSALVMSTATCASSVEGAIEKVPQSLEQKGPSEMLSMKPDVKGGFGDRMMFIPFQSDLGLHSPVDRSGFEYCGYLDAIESEDGDSSRAPYAKLQLKENVEGIARFGLFYHPSPFQAFKHIIDNGGKYSGLDRVFLENLRKSLVVSLDSAVNRTYSIPVEDEGFYCFVGYQEVAHQETVIGENSEPIVTIEFDSFNSNVPVTLKLQRQIFLSFSIVYGLISLWWAIRCICSRTKLHLVQVCLFCWFSFFILNHPVKQRIFSIDNPDEYLVPFVVSCFTYFLGDGIEYALYSLFITTTVLGFGTIRRTSKKMVLFFSLLTCGQAFLVNVAPMVYPLLYISGSDKACVLRMVWVFNKFLYLPLITFLGAVLAFRFRLKKASQFDTRWNLFALTLAIIILFAFNDLVIFDKLQKLWKYDDTTLEYLKIVNGGIKFVAFSILLGPYSKLFAEPKSLQLDDFLGKHDGHKDPSLEKF</sequence>
<protein>
    <recommendedName>
        <fullName>Uncharacterized membrane protein C569.06</fullName>
    </recommendedName>
</protein>
<comment type="subcellular location">
    <subcellularLocation>
        <location evidence="2">Endoplasmic reticulum membrane</location>
        <topology evidence="2">Multi-pass membrane protein</topology>
    </subcellularLocation>
    <subcellularLocation>
        <location evidence="2">Golgi apparatus membrane</location>
        <topology evidence="2">Multi-pass membrane protein</topology>
    </subcellularLocation>
</comment>
<proteinExistence type="inferred from homology"/>
<organism>
    <name type="scientific">Schizosaccharomyces pombe (strain 972 / ATCC 24843)</name>
    <name type="common">Fission yeast</name>
    <dbReference type="NCBI Taxonomy" id="284812"/>
    <lineage>
        <taxon>Eukaryota</taxon>
        <taxon>Fungi</taxon>
        <taxon>Dikarya</taxon>
        <taxon>Ascomycota</taxon>
        <taxon>Taphrinomycotina</taxon>
        <taxon>Schizosaccharomycetes</taxon>
        <taxon>Schizosaccharomycetales</taxon>
        <taxon>Schizosaccharomycetaceae</taxon>
        <taxon>Schizosaccharomyces</taxon>
    </lineage>
</organism>
<keyword id="KW-0256">Endoplasmic reticulum</keyword>
<keyword id="KW-0333">Golgi apparatus</keyword>
<keyword id="KW-0472">Membrane</keyword>
<keyword id="KW-1185">Reference proteome</keyword>
<keyword id="KW-0732">Signal</keyword>
<keyword id="KW-0812">Transmembrane</keyword>
<keyword id="KW-1133">Transmembrane helix</keyword>